<proteinExistence type="inferred from homology"/>
<gene>
    <name evidence="1" type="primary">rplD</name>
    <name type="ordered locus">Hore_01180</name>
</gene>
<organism>
    <name type="scientific">Halothermothrix orenii (strain H 168 / OCM 544 / DSM 9562)</name>
    <dbReference type="NCBI Taxonomy" id="373903"/>
    <lineage>
        <taxon>Bacteria</taxon>
        <taxon>Bacillati</taxon>
        <taxon>Bacillota</taxon>
        <taxon>Clostridia</taxon>
        <taxon>Halanaerobiales</taxon>
        <taxon>Halothermotrichaceae</taxon>
        <taxon>Halothermothrix</taxon>
    </lineage>
</organism>
<feature type="chain" id="PRO_1000166010" description="Large ribosomal subunit protein uL4">
    <location>
        <begin position="1"/>
        <end position="209"/>
    </location>
</feature>
<feature type="region of interest" description="Disordered" evidence="2">
    <location>
        <begin position="46"/>
        <end position="76"/>
    </location>
</feature>
<feature type="compositionally biased region" description="Basic residues" evidence="2">
    <location>
        <begin position="63"/>
        <end position="76"/>
    </location>
</feature>
<name>RL4_HALOH</name>
<comment type="function">
    <text evidence="1">One of the primary rRNA binding proteins, this protein initially binds near the 5'-end of the 23S rRNA. It is important during the early stages of 50S assembly. It makes multiple contacts with different domains of the 23S rRNA in the assembled 50S subunit and ribosome.</text>
</comment>
<comment type="function">
    <text evidence="1">Forms part of the polypeptide exit tunnel.</text>
</comment>
<comment type="subunit">
    <text evidence="1">Part of the 50S ribosomal subunit.</text>
</comment>
<comment type="similarity">
    <text evidence="1">Belongs to the universal ribosomal protein uL4 family.</text>
</comment>
<sequence length="209" mass="23211">MPQVAKYDTTGNRVGDIDLADNVFNEEVNEHVVHQVVTAQLATMRRGTASTKTRGEVSGGGRKPWRQKGTGRARHGSIRSPLWVGGGIVFGPRPRKHIKKVPKKVKKLALRSILSYKSQNEELIILDELKFDTPKTKQVVELLSNLNLEGKKVLIILPDKDANIYLSARNIPGVKTLVVDALNAFDLLNNDCIVMSEEAVKRVEEVLAR</sequence>
<evidence type="ECO:0000255" key="1">
    <source>
        <dbReference type="HAMAP-Rule" id="MF_01328"/>
    </source>
</evidence>
<evidence type="ECO:0000256" key="2">
    <source>
        <dbReference type="SAM" id="MobiDB-lite"/>
    </source>
</evidence>
<evidence type="ECO:0000305" key="3"/>
<reference key="1">
    <citation type="journal article" date="2009" name="PLoS ONE">
        <title>Genome analysis of the anaerobic thermohalophilic bacterium Halothermothrix orenii.</title>
        <authorList>
            <person name="Mavromatis K."/>
            <person name="Ivanova N."/>
            <person name="Anderson I."/>
            <person name="Lykidis A."/>
            <person name="Hooper S.D."/>
            <person name="Sun H."/>
            <person name="Kunin V."/>
            <person name="Lapidus A."/>
            <person name="Hugenholtz P."/>
            <person name="Patel B."/>
            <person name="Kyrpides N.C."/>
        </authorList>
    </citation>
    <scope>NUCLEOTIDE SEQUENCE [LARGE SCALE GENOMIC DNA]</scope>
    <source>
        <strain>H 168 / OCM 544 / DSM 9562</strain>
    </source>
</reference>
<protein>
    <recommendedName>
        <fullName evidence="1">Large ribosomal subunit protein uL4</fullName>
    </recommendedName>
    <alternativeName>
        <fullName evidence="3">50S ribosomal protein L4</fullName>
    </alternativeName>
</protein>
<keyword id="KW-1185">Reference proteome</keyword>
<keyword id="KW-0687">Ribonucleoprotein</keyword>
<keyword id="KW-0689">Ribosomal protein</keyword>
<keyword id="KW-0694">RNA-binding</keyword>
<keyword id="KW-0699">rRNA-binding</keyword>
<dbReference type="EMBL" id="CP001098">
    <property type="protein sequence ID" value="ACL68879.1"/>
    <property type="molecule type" value="Genomic_DNA"/>
</dbReference>
<dbReference type="RefSeq" id="WP_012635077.1">
    <property type="nucleotide sequence ID" value="NC_011899.1"/>
</dbReference>
<dbReference type="SMR" id="B8D0C5"/>
<dbReference type="STRING" id="373903.Hore_01180"/>
<dbReference type="KEGG" id="hor:Hore_01180"/>
<dbReference type="eggNOG" id="COG0088">
    <property type="taxonomic scope" value="Bacteria"/>
</dbReference>
<dbReference type="HOGENOM" id="CLU_041575_5_2_9"/>
<dbReference type="OrthoDB" id="9803201at2"/>
<dbReference type="Proteomes" id="UP000000719">
    <property type="component" value="Chromosome"/>
</dbReference>
<dbReference type="GO" id="GO:1990904">
    <property type="term" value="C:ribonucleoprotein complex"/>
    <property type="evidence" value="ECO:0007669"/>
    <property type="project" value="UniProtKB-KW"/>
</dbReference>
<dbReference type="GO" id="GO:0005840">
    <property type="term" value="C:ribosome"/>
    <property type="evidence" value="ECO:0007669"/>
    <property type="project" value="UniProtKB-KW"/>
</dbReference>
<dbReference type="GO" id="GO:0019843">
    <property type="term" value="F:rRNA binding"/>
    <property type="evidence" value="ECO:0007669"/>
    <property type="project" value="UniProtKB-UniRule"/>
</dbReference>
<dbReference type="GO" id="GO:0003735">
    <property type="term" value="F:structural constituent of ribosome"/>
    <property type="evidence" value="ECO:0007669"/>
    <property type="project" value="InterPro"/>
</dbReference>
<dbReference type="GO" id="GO:0006412">
    <property type="term" value="P:translation"/>
    <property type="evidence" value="ECO:0007669"/>
    <property type="project" value="UniProtKB-UniRule"/>
</dbReference>
<dbReference type="Gene3D" id="3.40.1370.10">
    <property type="match status" value="1"/>
</dbReference>
<dbReference type="HAMAP" id="MF_01328_B">
    <property type="entry name" value="Ribosomal_uL4_B"/>
    <property type="match status" value="1"/>
</dbReference>
<dbReference type="InterPro" id="IPR002136">
    <property type="entry name" value="Ribosomal_uL4"/>
</dbReference>
<dbReference type="InterPro" id="IPR013005">
    <property type="entry name" value="Ribosomal_uL4-like"/>
</dbReference>
<dbReference type="InterPro" id="IPR023574">
    <property type="entry name" value="Ribosomal_uL4_dom_sf"/>
</dbReference>
<dbReference type="NCBIfam" id="TIGR03953">
    <property type="entry name" value="rplD_bact"/>
    <property type="match status" value="1"/>
</dbReference>
<dbReference type="PANTHER" id="PTHR10746">
    <property type="entry name" value="50S RIBOSOMAL PROTEIN L4"/>
    <property type="match status" value="1"/>
</dbReference>
<dbReference type="PANTHER" id="PTHR10746:SF6">
    <property type="entry name" value="LARGE RIBOSOMAL SUBUNIT PROTEIN UL4M"/>
    <property type="match status" value="1"/>
</dbReference>
<dbReference type="Pfam" id="PF00573">
    <property type="entry name" value="Ribosomal_L4"/>
    <property type="match status" value="1"/>
</dbReference>
<dbReference type="SUPFAM" id="SSF52166">
    <property type="entry name" value="Ribosomal protein L4"/>
    <property type="match status" value="1"/>
</dbReference>
<accession>B8D0C5</accession>